<keyword id="KW-0378">Hydrolase</keyword>
<keyword id="KW-0408">Iron</keyword>
<keyword id="KW-0479">Metal-binding</keyword>
<keyword id="KW-0648">Protein biosynthesis</keyword>
<keyword id="KW-1185">Reference proteome</keyword>
<name>DEF_LISMO</name>
<protein>
    <recommendedName>
        <fullName evidence="1">Peptide deformylase</fullName>
        <shortName evidence="1">PDF</shortName>
        <ecNumber evidence="1">3.5.1.88</ecNumber>
    </recommendedName>
    <alternativeName>
        <fullName evidence="1">Polypeptide deformylase</fullName>
    </alternativeName>
</protein>
<gene>
    <name evidence="1" type="primary">def</name>
    <name type="ordered locus">lmo1051</name>
</gene>
<evidence type="ECO:0000255" key="1">
    <source>
        <dbReference type="HAMAP-Rule" id="MF_00163"/>
    </source>
</evidence>
<dbReference type="EC" id="3.5.1.88" evidence="1"/>
<dbReference type="EMBL" id="AL591977">
    <property type="protein sequence ID" value="CAC99129.1"/>
    <property type="molecule type" value="Genomic_DNA"/>
</dbReference>
<dbReference type="PIR" id="AC1206">
    <property type="entry name" value="AC1206"/>
</dbReference>
<dbReference type="RefSeq" id="NP_464576.1">
    <property type="nucleotide sequence ID" value="NC_003210.1"/>
</dbReference>
<dbReference type="RefSeq" id="WP_003722677.1">
    <property type="nucleotide sequence ID" value="NZ_CP149495.1"/>
</dbReference>
<dbReference type="SMR" id="Q8Y866"/>
<dbReference type="STRING" id="169963.gene:17593707"/>
<dbReference type="PaxDb" id="169963-lmo1051"/>
<dbReference type="EnsemblBacteria" id="CAC99129">
    <property type="protein sequence ID" value="CAC99129"/>
    <property type="gene ID" value="CAC99129"/>
</dbReference>
<dbReference type="GeneID" id="986625"/>
<dbReference type="KEGG" id="lmo:lmo1051"/>
<dbReference type="PATRIC" id="fig|169963.11.peg.1080"/>
<dbReference type="eggNOG" id="COG0242">
    <property type="taxonomic scope" value="Bacteria"/>
</dbReference>
<dbReference type="HOGENOM" id="CLU_061901_4_0_9"/>
<dbReference type="OrthoDB" id="9784988at2"/>
<dbReference type="PhylomeDB" id="Q8Y866"/>
<dbReference type="BioCyc" id="LMON169963:LMO1051-MONOMER"/>
<dbReference type="Proteomes" id="UP000000817">
    <property type="component" value="Chromosome"/>
</dbReference>
<dbReference type="GO" id="GO:0046872">
    <property type="term" value="F:metal ion binding"/>
    <property type="evidence" value="ECO:0007669"/>
    <property type="project" value="UniProtKB-KW"/>
</dbReference>
<dbReference type="GO" id="GO:0042586">
    <property type="term" value="F:peptide deformylase activity"/>
    <property type="evidence" value="ECO:0000318"/>
    <property type="project" value="GO_Central"/>
</dbReference>
<dbReference type="GO" id="GO:0043686">
    <property type="term" value="P:co-translational protein modification"/>
    <property type="evidence" value="ECO:0000318"/>
    <property type="project" value="GO_Central"/>
</dbReference>
<dbReference type="GO" id="GO:0006412">
    <property type="term" value="P:translation"/>
    <property type="evidence" value="ECO:0007669"/>
    <property type="project" value="UniProtKB-UniRule"/>
</dbReference>
<dbReference type="CDD" id="cd00487">
    <property type="entry name" value="Pep_deformylase"/>
    <property type="match status" value="1"/>
</dbReference>
<dbReference type="FunFam" id="3.90.45.10:FF:000002">
    <property type="entry name" value="Peptide deformylase"/>
    <property type="match status" value="1"/>
</dbReference>
<dbReference type="Gene3D" id="3.90.45.10">
    <property type="entry name" value="Peptide deformylase"/>
    <property type="match status" value="1"/>
</dbReference>
<dbReference type="HAMAP" id="MF_00163">
    <property type="entry name" value="Pep_deformylase"/>
    <property type="match status" value="1"/>
</dbReference>
<dbReference type="InterPro" id="IPR023635">
    <property type="entry name" value="Peptide_deformylase"/>
</dbReference>
<dbReference type="InterPro" id="IPR036821">
    <property type="entry name" value="Peptide_deformylase_sf"/>
</dbReference>
<dbReference type="NCBIfam" id="TIGR00079">
    <property type="entry name" value="pept_deformyl"/>
    <property type="match status" value="1"/>
</dbReference>
<dbReference type="PANTHER" id="PTHR10458">
    <property type="entry name" value="PEPTIDE DEFORMYLASE"/>
    <property type="match status" value="1"/>
</dbReference>
<dbReference type="PANTHER" id="PTHR10458:SF8">
    <property type="entry name" value="PEPTIDE DEFORMYLASE 2"/>
    <property type="match status" value="1"/>
</dbReference>
<dbReference type="Pfam" id="PF01327">
    <property type="entry name" value="Pep_deformylase"/>
    <property type="match status" value="1"/>
</dbReference>
<dbReference type="PIRSF" id="PIRSF004749">
    <property type="entry name" value="Pep_def"/>
    <property type="match status" value="1"/>
</dbReference>
<dbReference type="PRINTS" id="PR01576">
    <property type="entry name" value="PDEFORMYLASE"/>
</dbReference>
<dbReference type="SUPFAM" id="SSF56420">
    <property type="entry name" value="Peptide deformylase"/>
    <property type="match status" value="1"/>
</dbReference>
<accession>Q8Y866</accession>
<sequence length="183" mass="20643">MLTMDDIVREGHPALREVATEVTFPLSDEEKKLGRDMLEFLINSQDEDLAEKYGLRGGVGIAAPQLAVTKRFLAIHVHDEKDRLYSYVLYNPKIRSHSVQQACLSGGEGCLSVDREVPGYVVRSERVTIDAFDENGTPLKLRFKGYPAIVIQHEIDHLNGIMFYDHINKENPSYLPPDVDVFG</sequence>
<reference key="1">
    <citation type="journal article" date="2001" name="Science">
        <title>Comparative genomics of Listeria species.</title>
        <authorList>
            <person name="Glaser P."/>
            <person name="Frangeul L."/>
            <person name="Buchrieser C."/>
            <person name="Rusniok C."/>
            <person name="Amend A."/>
            <person name="Baquero F."/>
            <person name="Berche P."/>
            <person name="Bloecker H."/>
            <person name="Brandt P."/>
            <person name="Chakraborty T."/>
            <person name="Charbit A."/>
            <person name="Chetouani F."/>
            <person name="Couve E."/>
            <person name="de Daruvar A."/>
            <person name="Dehoux P."/>
            <person name="Domann E."/>
            <person name="Dominguez-Bernal G."/>
            <person name="Duchaud E."/>
            <person name="Durant L."/>
            <person name="Dussurget O."/>
            <person name="Entian K.-D."/>
            <person name="Fsihi H."/>
            <person name="Garcia-del Portillo F."/>
            <person name="Garrido P."/>
            <person name="Gautier L."/>
            <person name="Goebel W."/>
            <person name="Gomez-Lopez N."/>
            <person name="Hain T."/>
            <person name="Hauf J."/>
            <person name="Jackson D."/>
            <person name="Jones L.-M."/>
            <person name="Kaerst U."/>
            <person name="Kreft J."/>
            <person name="Kuhn M."/>
            <person name="Kunst F."/>
            <person name="Kurapkat G."/>
            <person name="Madueno E."/>
            <person name="Maitournam A."/>
            <person name="Mata Vicente J."/>
            <person name="Ng E."/>
            <person name="Nedjari H."/>
            <person name="Nordsiek G."/>
            <person name="Novella S."/>
            <person name="de Pablos B."/>
            <person name="Perez-Diaz J.-C."/>
            <person name="Purcell R."/>
            <person name="Remmel B."/>
            <person name="Rose M."/>
            <person name="Schlueter T."/>
            <person name="Simoes N."/>
            <person name="Tierrez A."/>
            <person name="Vazquez-Boland J.-A."/>
            <person name="Voss H."/>
            <person name="Wehland J."/>
            <person name="Cossart P."/>
        </authorList>
    </citation>
    <scope>NUCLEOTIDE SEQUENCE [LARGE SCALE GENOMIC DNA]</scope>
    <source>
        <strain>ATCC BAA-679 / EGD-e</strain>
    </source>
</reference>
<proteinExistence type="inferred from homology"/>
<feature type="chain" id="PRO_0000082798" description="Peptide deformylase">
    <location>
        <begin position="1"/>
        <end position="183"/>
    </location>
</feature>
<feature type="active site" evidence="1">
    <location>
        <position position="154"/>
    </location>
</feature>
<feature type="binding site" evidence="1">
    <location>
        <position position="110"/>
    </location>
    <ligand>
        <name>Fe cation</name>
        <dbReference type="ChEBI" id="CHEBI:24875"/>
    </ligand>
</feature>
<feature type="binding site" evidence="1">
    <location>
        <position position="153"/>
    </location>
    <ligand>
        <name>Fe cation</name>
        <dbReference type="ChEBI" id="CHEBI:24875"/>
    </ligand>
</feature>
<feature type="binding site" evidence="1">
    <location>
        <position position="157"/>
    </location>
    <ligand>
        <name>Fe cation</name>
        <dbReference type="ChEBI" id="CHEBI:24875"/>
    </ligand>
</feature>
<organism>
    <name type="scientific">Listeria monocytogenes serovar 1/2a (strain ATCC BAA-679 / EGD-e)</name>
    <dbReference type="NCBI Taxonomy" id="169963"/>
    <lineage>
        <taxon>Bacteria</taxon>
        <taxon>Bacillati</taxon>
        <taxon>Bacillota</taxon>
        <taxon>Bacilli</taxon>
        <taxon>Bacillales</taxon>
        <taxon>Listeriaceae</taxon>
        <taxon>Listeria</taxon>
    </lineage>
</organism>
<comment type="function">
    <text evidence="1">Removes the formyl group from the N-terminal Met of newly synthesized proteins. Requires at least a dipeptide for an efficient rate of reaction. N-terminal L-methionine is a prerequisite for activity but the enzyme has broad specificity at other positions.</text>
</comment>
<comment type="catalytic activity">
    <reaction evidence="1">
        <text>N-terminal N-formyl-L-methionyl-[peptide] + H2O = N-terminal L-methionyl-[peptide] + formate</text>
        <dbReference type="Rhea" id="RHEA:24420"/>
        <dbReference type="Rhea" id="RHEA-COMP:10639"/>
        <dbReference type="Rhea" id="RHEA-COMP:10640"/>
        <dbReference type="ChEBI" id="CHEBI:15377"/>
        <dbReference type="ChEBI" id="CHEBI:15740"/>
        <dbReference type="ChEBI" id="CHEBI:49298"/>
        <dbReference type="ChEBI" id="CHEBI:64731"/>
        <dbReference type="EC" id="3.5.1.88"/>
    </reaction>
</comment>
<comment type="cofactor">
    <cofactor evidence="1">
        <name>Fe(2+)</name>
        <dbReference type="ChEBI" id="CHEBI:29033"/>
    </cofactor>
    <text evidence="1">Binds 1 Fe(2+) ion.</text>
</comment>
<comment type="similarity">
    <text evidence="1">Belongs to the polypeptide deformylase family.</text>
</comment>